<feature type="chain" id="PRO_0000194405" description="AMP deaminase 1">
    <location>
        <begin position="1"/>
        <end position="747"/>
    </location>
</feature>
<feature type="active site" description="Proton acceptor" evidence="2">
    <location>
        <position position="594"/>
    </location>
</feature>
<feature type="binding site" evidence="1">
    <location>
        <position position="303"/>
    </location>
    <ligand>
        <name>Zn(2+)</name>
        <dbReference type="ChEBI" id="CHEBI:29105"/>
        <note>catalytic</note>
    </ligand>
</feature>
<feature type="binding site" evidence="1">
    <location>
        <position position="305"/>
    </location>
    <ligand>
        <name>substrate</name>
    </ligand>
</feature>
<feature type="binding site" evidence="1">
    <location>
        <position position="305"/>
    </location>
    <ligand>
        <name>Zn(2+)</name>
        <dbReference type="ChEBI" id="CHEBI:29105"/>
        <note>catalytic</note>
    </ligand>
</feature>
<feature type="binding site" evidence="1">
    <location>
        <begin position="374"/>
        <end position="379"/>
    </location>
    <ligand>
        <name>substrate</name>
    </ligand>
</feature>
<feature type="binding site" evidence="1">
    <location>
        <position position="572"/>
    </location>
    <ligand>
        <name>Zn(2+)</name>
        <dbReference type="ChEBI" id="CHEBI:29105"/>
        <note>catalytic</note>
    </ligand>
</feature>
<feature type="binding site" evidence="1">
    <location>
        <position position="575"/>
    </location>
    <ligand>
        <name>substrate</name>
    </ligand>
</feature>
<feature type="binding site" evidence="1">
    <location>
        <position position="649"/>
    </location>
    <ligand>
        <name>Zn(2+)</name>
        <dbReference type="ChEBI" id="CHEBI:29105"/>
        <note>catalytic</note>
    </ligand>
</feature>
<feature type="binding site" evidence="1">
    <location>
        <begin position="650"/>
        <end position="653"/>
    </location>
    <ligand>
        <name>substrate</name>
    </ligand>
</feature>
<feature type="modified residue" description="Phosphothreonine" evidence="9">
    <location>
        <position position="81"/>
    </location>
</feature>
<feature type="modified residue" description="Phosphoserine" evidence="9">
    <location>
        <position position="85"/>
    </location>
</feature>
<feature type="modified residue" description="Phosphotyrosine" evidence="9">
    <location>
        <position position="216"/>
    </location>
</feature>
<feature type="modified residue" description="Phosphoserine" evidence="9">
    <location>
        <position position="441"/>
    </location>
</feature>
<feature type="mutagenesis site" description="Loss of AMP deaminase activity." evidence="3">
    <original>R</original>
    <variation>W</variation>
    <location>
        <position position="388"/>
    </location>
</feature>
<feature type="mutagenesis site" description="Loss of AMP deaminase activity." evidence="3">
    <original>R</original>
    <variation>H</variation>
    <location>
        <position position="425"/>
    </location>
</feature>
<reference key="1">
    <citation type="journal article" date="1987" name="J. Biol. Chem.">
        <title>Cloning and sequence of rat myoadenylate deaminase cDNA. Evidence for tissue-specific and developmental regulation.</title>
        <authorList>
            <person name="Sabina R.L."/>
            <person name="Marquetant R."/>
            <person name="Desai N.M."/>
            <person name="Kaletha K."/>
            <person name="Holmes E.W."/>
        </authorList>
    </citation>
    <scope>NUCLEOTIDE SEQUENCE [MRNA]</scope>
    <scope>PROTEIN SEQUENCE OF 536-548</scope>
    <source>
        <tissue>Muscle</tissue>
    </source>
</reference>
<reference key="2">
    <citation type="journal article" date="1990" name="Mol. Cell. Biol.">
        <title>A novel pathway for alternative splicing: identification of an RNA intermediate that generates an alternative 5' splice donor site not present in the primary transcript of AMPD1.</title>
        <authorList>
            <person name="Mineo I."/>
            <person name="Clarke P.R."/>
            <person name="Sabina R.L."/>
            <person name="Holmes E.W."/>
        </authorList>
    </citation>
    <scope>NUCLEOTIDE SEQUENCE [MRNA] OF 1-17</scope>
</reference>
<reference key="3">
    <citation type="journal article" date="1997" name="Gene">
        <title>Cloning and expression of cDNA encoding heart-type isoform of AMP deaminase.</title>
        <authorList>
            <person name="Wang X."/>
            <person name="Morisaki H."/>
            <person name="Sermsuvitayawong K."/>
            <person name="Mineo I."/>
            <person name="Toyama K."/>
            <person name="Ogasawara N."/>
            <person name="Mukai T."/>
            <person name="Morisaki T."/>
        </authorList>
    </citation>
    <scope>FUNCTION</scope>
    <scope>CATALYTIC ACTIVITY</scope>
    <scope>PATHWAY</scope>
    <source>
        <tissue>Heart</tissue>
    </source>
</reference>
<reference key="4">
    <citation type="journal article" date="2000" name="Hum. Mutat.">
        <title>First missense mutations (R388W and R425H) of AMPD1 accompanied with myopathy found in a Japanese patient.</title>
        <authorList>
            <person name="Morisaki H."/>
            <person name="Higuchi I."/>
            <person name="Abe M."/>
            <person name="Osame M."/>
            <person name="Morisaki T."/>
        </authorList>
    </citation>
    <scope>FUNCTION</scope>
    <scope>CATALYTIC ACTIVITY</scope>
    <scope>PATHWAY</scope>
    <scope>MUTAGENESIS OF ARG-388 AND ARG-425</scope>
</reference>
<reference key="5">
    <citation type="journal article" date="2012" name="Nat. Commun.">
        <title>Quantitative maps of protein phosphorylation sites across 14 different rat organs and tissues.</title>
        <authorList>
            <person name="Lundby A."/>
            <person name="Secher A."/>
            <person name="Lage K."/>
            <person name="Nordsborg N.B."/>
            <person name="Dmytriyev A."/>
            <person name="Lundby C."/>
            <person name="Olsen J.V."/>
        </authorList>
    </citation>
    <scope>PHOSPHORYLATION [LARGE SCALE ANALYSIS] AT THR-81; SER-85; TYR-216 AND SER-441</scope>
    <scope>IDENTIFICATION BY MASS SPECTROMETRY [LARGE SCALE ANALYSIS]</scope>
</reference>
<evidence type="ECO:0000250" key="1"/>
<evidence type="ECO:0000255" key="2">
    <source>
        <dbReference type="PROSITE-ProRule" id="PRU10104"/>
    </source>
</evidence>
<evidence type="ECO:0000269" key="3">
    <source>
    </source>
</evidence>
<evidence type="ECO:0000269" key="4">
    <source>
    </source>
</evidence>
<evidence type="ECO:0000305" key="5"/>
<evidence type="ECO:0000305" key="6">
    <source>
    </source>
</evidence>
<evidence type="ECO:0000305" key="7">
    <source>
    </source>
</evidence>
<evidence type="ECO:0000312" key="8">
    <source>
        <dbReference type="RGD" id="2109"/>
    </source>
</evidence>
<evidence type="ECO:0007744" key="9">
    <source>
    </source>
</evidence>
<organism>
    <name type="scientific">Rattus norvegicus</name>
    <name type="common">Rat</name>
    <dbReference type="NCBI Taxonomy" id="10116"/>
    <lineage>
        <taxon>Eukaryota</taxon>
        <taxon>Metazoa</taxon>
        <taxon>Chordata</taxon>
        <taxon>Craniata</taxon>
        <taxon>Vertebrata</taxon>
        <taxon>Euteleostomi</taxon>
        <taxon>Mammalia</taxon>
        <taxon>Eutheria</taxon>
        <taxon>Euarchontoglires</taxon>
        <taxon>Glires</taxon>
        <taxon>Rodentia</taxon>
        <taxon>Myomorpha</taxon>
        <taxon>Muroidea</taxon>
        <taxon>Muridae</taxon>
        <taxon>Murinae</taxon>
        <taxon>Rattus</taxon>
    </lineage>
</organism>
<keyword id="KW-0903">Direct protein sequencing</keyword>
<keyword id="KW-0378">Hydrolase</keyword>
<keyword id="KW-0479">Metal-binding</keyword>
<keyword id="KW-0546">Nucleotide metabolism</keyword>
<keyword id="KW-0597">Phosphoprotein</keyword>
<keyword id="KW-1185">Reference proteome</keyword>
<keyword id="KW-0862">Zinc</keyword>
<dbReference type="EC" id="3.5.4.6" evidence="3 4"/>
<dbReference type="EMBL" id="J02811">
    <property type="protein sequence ID" value="AAB54086.1"/>
    <property type="molecule type" value="mRNA"/>
</dbReference>
<dbReference type="EMBL" id="M58688">
    <property type="protein sequence ID" value="AAA40726.1"/>
    <property type="molecule type" value="mRNA"/>
</dbReference>
<dbReference type="PIR" id="A27366">
    <property type="entry name" value="A27366"/>
</dbReference>
<dbReference type="RefSeq" id="NP_620231.1">
    <property type="nucleotide sequence ID" value="NM_138876.1"/>
</dbReference>
<dbReference type="SMR" id="P10759"/>
<dbReference type="FunCoup" id="P10759">
    <property type="interactions" value="110"/>
</dbReference>
<dbReference type="STRING" id="10116.ENSRNOP00000025248"/>
<dbReference type="BindingDB" id="P10759"/>
<dbReference type="iPTMnet" id="P10759"/>
<dbReference type="PhosphoSitePlus" id="P10759"/>
<dbReference type="PaxDb" id="10116-ENSRNOP00000025248"/>
<dbReference type="Ensembl" id="ENSRNOT00000112496.1">
    <property type="protein sequence ID" value="ENSRNOP00000080039.1"/>
    <property type="gene ID" value="ENSRNOG00000018656.7"/>
</dbReference>
<dbReference type="GeneID" id="25028"/>
<dbReference type="KEGG" id="rno:25028"/>
<dbReference type="AGR" id="RGD:2109"/>
<dbReference type="CTD" id="270"/>
<dbReference type="RGD" id="2109">
    <property type="gene designation" value="Ampd1"/>
</dbReference>
<dbReference type="eggNOG" id="KOG1096">
    <property type="taxonomic scope" value="Eukaryota"/>
</dbReference>
<dbReference type="GeneTree" id="ENSGT00950000183011"/>
<dbReference type="HOGENOM" id="CLU_003782_4_0_1"/>
<dbReference type="InParanoid" id="P10759"/>
<dbReference type="PhylomeDB" id="P10759"/>
<dbReference type="TreeFam" id="TF300439"/>
<dbReference type="BRENDA" id="3.5.4.6">
    <property type="organism ID" value="5301"/>
</dbReference>
<dbReference type="Reactome" id="R-RNO-74217">
    <property type="pathway name" value="Purine salvage"/>
</dbReference>
<dbReference type="UniPathway" id="UPA00591">
    <property type="reaction ID" value="UER00663"/>
</dbReference>
<dbReference type="PRO" id="PR:P10759"/>
<dbReference type="Proteomes" id="UP000002494">
    <property type="component" value="Chromosome 2"/>
</dbReference>
<dbReference type="Bgee" id="ENSRNOG00000018656">
    <property type="expression patterns" value="Expressed in skeletal muscle tissue and 13 other cell types or tissues"/>
</dbReference>
<dbReference type="GO" id="GO:0005829">
    <property type="term" value="C:cytosol"/>
    <property type="evidence" value="ECO:0000318"/>
    <property type="project" value="GO_Central"/>
</dbReference>
<dbReference type="GO" id="GO:0003876">
    <property type="term" value="F:AMP deaminase activity"/>
    <property type="evidence" value="ECO:0000314"/>
    <property type="project" value="UniProtKB"/>
</dbReference>
<dbReference type="GO" id="GO:0042802">
    <property type="term" value="F:identical protein binding"/>
    <property type="evidence" value="ECO:0000266"/>
    <property type="project" value="RGD"/>
</dbReference>
<dbReference type="GO" id="GO:0046872">
    <property type="term" value="F:metal ion binding"/>
    <property type="evidence" value="ECO:0007669"/>
    <property type="project" value="UniProtKB-KW"/>
</dbReference>
<dbReference type="GO" id="GO:0032036">
    <property type="term" value="F:myosin heavy chain binding"/>
    <property type="evidence" value="ECO:0000314"/>
    <property type="project" value="RGD"/>
</dbReference>
<dbReference type="GO" id="GO:0046033">
    <property type="term" value="P:AMP metabolic process"/>
    <property type="evidence" value="ECO:0000318"/>
    <property type="project" value="GO_Central"/>
</dbReference>
<dbReference type="GO" id="GO:0032263">
    <property type="term" value="P:GMP salvage"/>
    <property type="evidence" value="ECO:0000266"/>
    <property type="project" value="RGD"/>
</dbReference>
<dbReference type="GO" id="GO:0006188">
    <property type="term" value="P:IMP biosynthetic process"/>
    <property type="evidence" value="ECO:0000318"/>
    <property type="project" value="GO_Central"/>
</dbReference>
<dbReference type="GO" id="GO:0032264">
    <property type="term" value="P:IMP salvage"/>
    <property type="evidence" value="ECO:0000266"/>
    <property type="project" value="RGD"/>
</dbReference>
<dbReference type="GO" id="GO:0033198">
    <property type="term" value="P:response to ATP"/>
    <property type="evidence" value="ECO:0000314"/>
    <property type="project" value="RGD"/>
</dbReference>
<dbReference type="CDD" id="cd01319">
    <property type="entry name" value="AMPD"/>
    <property type="match status" value="1"/>
</dbReference>
<dbReference type="FunFam" id="4.10.800.20:FF:000001">
    <property type="entry name" value="AMP deaminase"/>
    <property type="match status" value="1"/>
</dbReference>
<dbReference type="Gene3D" id="4.10.800.20">
    <property type="match status" value="1"/>
</dbReference>
<dbReference type="Gene3D" id="3.20.20.140">
    <property type="entry name" value="Metal-dependent hydrolases"/>
    <property type="match status" value="1"/>
</dbReference>
<dbReference type="InterPro" id="IPR006650">
    <property type="entry name" value="A/AMP_deam_AS"/>
</dbReference>
<dbReference type="InterPro" id="IPR006329">
    <property type="entry name" value="AMPD"/>
</dbReference>
<dbReference type="InterPro" id="IPR032466">
    <property type="entry name" value="Metal_Hydrolase"/>
</dbReference>
<dbReference type="NCBIfam" id="TIGR01429">
    <property type="entry name" value="AMP_deaminase"/>
    <property type="match status" value="1"/>
</dbReference>
<dbReference type="PANTHER" id="PTHR11359">
    <property type="entry name" value="AMP DEAMINASE"/>
    <property type="match status" value="1"/>
</dbReference>
<dbReference type="PANTHER" id="PTHR11359:SF1">
    <property type="entry name" value="AMP DEAMINASE 1"/>
    <property type="match status" value="1"/>
</dbReference>
<dbReference type="Pfam" id="PF19326">
    <property type="entry name" value="AMP_deaminase"/>
    <property type="match status" value="1"/>
</dbReference>
<dbReference type="PIRSF" id="PIRSF001251">
    <property type="entry name" value="AMP_deaminase_met"/>
    <property type="match status" value="1"/>
</dbReference>
<dbReference type="SUPFAM" id="SSF51556">
    <property type="entry name" value="Metallo-dependent hydrolases"/>
    <property type="match status" value="1"/>
</dbReference>
<dbReference type="PROSITE" id="PS00485">
    <property type="entry name" value="A_DEAMINASE"/>
    <property type="match status" value="1"/>
</dbReference>
<name>AMPD1_RAT</name>
<gene>
    <name evidence="8" type="primary">Ampd1</name>
</gene>
<accession>P10759</accession>
<accession>P78501</accession>
<accession>Q6LDJ4</accession>
<comment type="function">
    <text evidence="6 7">AMP deaminase plays a critical role in energy metabolism.</text>
</comment>
<comment type="catalytic activity">
    <reaction evidence="3 4">
        <text>AMP + H2O + H(+) = IMP + NH4(+)</text>
        <dbReference type="Rhea" id="RHEA:14777"/>
        <dbReference type="ChEBI" id="CHEBI:15377"/>
        <dbReference type="ChEBI" id="CHEBI:15378"/>
        <dbReference type="ChEBI" id="CHEBI:28938"/>
        <dbReference type="ChEBI" id="CHEBI:58053"/>
        <dbReference type="ChEBI" id="CHEBI:456215"/>
        <dbReference type="EC" id="3.5.4.6"/>
    </reaction>
    <physiologicalReaction direction="left-to-right" evidence="6 7">
        <dbReference type="Rhea" id="RHEA:14778"/>
    </physiologicalReaction>
</comment>
<comment type="cofactor">
    <cofactor evidence="1">
        <name>Zn(2+)</name>
        <dbReference type="ChEBI" id="CHEBI:29105"/>
    </cofactor>
    <text evidence="1">Binds 1 zinc ion per subunit.</text>
</comment>
<comment type="pathway">
    <text evidence="6 7">Purine metabolism; IMP biosynthesis via salvage pathway; IMP from AMP: step 1/1.</text>
</comment>
<comment type="subunit">
    <text>Homotetramer.</text>
</comment>
<comment type="similarity">
    <text evidence="5">Belongs to the metallo-dependent hydrolases superfamily. Adenosine and AMP deaminases family.</text>
</comment>
<proteinExistence type="evidence at protein level"/>
<sequence length="747" mass="86432">MPLFKLTGQGKQIDDAMRSFAEKVFASEVKDEGGRHEISPFDVDEICPISLREMQAHIFHMENLSMSMDGRRKRRFQGRKTVNLSIPQSETSSTKLSHIEEFISSSPTYESVPDFQRVQITGDYASGVTVEDFEVVCKGLYRALCIREKYMQKSFQRFPKTPSKYLRNIDGEALVAIESFYPVFTPPPKKGEDPFRREDLPANLGYHLKMKGGVIYIYPDEAAASRDEPKPYPYPNLDDFLDDMNFLLALIAQGPVKTYTHRRLKFLSSKFQVHQMLNEMDELKELKNNPHRDFYNCRKVDTHIHAAACMNQKHLLRFIKKSYHIDADRVVYSTKEKNLTLKELFAQLNMHPYDLTVDSLDVHAGRQTFQRFDKFNDKYNPVGASELRDLYLKTDNYINGEYFATIIKEVGADLVDAKYQHAEPRLSIYGRSPDEWSKLSSWFVGNRIYCPNMTWMIQVPRIYDVFRSKNFLPHFGKMLENIFLPVFEATINPQTHPDLSVFLKHITGFDSVDDESKHSGHMFSSKSPKPEEWTMENNPSYTYYAYYMYANIMVLNCLRKERGMNTFLFRPHCGEAGALTHLMTAFMIADNISHGLNLKKSPVLQYLFFLAQIPIAMSPLSNNSLFLEYAKNPFLDFLQKGLMISLSTDDPMQFHFTKEPLMEEYAIAAQVFKLSTCDMCEVARNSVLQCGISHEEKAKFLGNNYLEEGPVGNDIRRTNVAQIRMAYRYETWCYELNLIAEGLKSTE</sequence>
<protein>
    <recommendedName>
        <fullName evidence="7">AMP deaminase 1</fullName>
        <ecNumber evidence="3 4">3.5.4.6</ecNumber>
    </recommendedName>
    <alternativeName>
        <fullName>AMP deaminase isoform M</fullName>
    </alternativeName>
    <alternativeName>
        <fullName>Myoadenylate deaminase</fullName>
    </alternativeName>
</protein>